<organism>
    <name type="scientific">Acinetobacter baumannii (strain AB307-0294)</name>
    <dbReference type="NCBI Taxonomy" id="557600"/>
    <lineage>
        <taxon>Bacteria</taxon>
        <taxon>Pseudomonadati</taxon>
        <taxon>Pseudomonadota</taxon>
        <taxon>Gammaproteobacteria</taxon>
        <taxon>Moraxellales</taxon>
        <taxon>Moraxellaceae</taxon>
        <taxon>Acinetobacter</taxon>
        <taxon>Acinetobacter calcoaceticus/baumannii complex</taxon>
    </lineage>
</organism>
<comment type="function">
    <text evidence="1">Associates with the EF-Tu.GDP complex and induces the exchange of GDP to GTP. It remains bound to the aminoacyl-tRNA.EF-Tu.GTP complex up to the GTP hydrolysis stage on the ribosome.</text>
</comment>
<comment type="subcellular location">
    <subcellularLocation>
        <location evidence="1">Cytoplasm</location>
    </subcellularLocation>
</comment>
<comment type="similarity">
    <text evidence="1">Belongs to the EF-Ts family.</text>
</comment>
<dbReference type="EMBL" id="CP001172">
    <property type="protein sequence ID" value="ACJ58707.1"/>
    <property type="molecule type" value="Genomic_DNA"/>
</dbReference>
<dbReference type="RefSeq" id="WP_000125378.1">
    <property type="nucleotide sequence ID" value="NZ_CP001172.1"/>
</dbReference>
<dbReference type="SMR" id="B7GZQ0"/>
<dbReference type="GeneID" id="92894652"/>
<dbReference type="HOGENOM" id="CLU_047155_0_2_6"/>
<dbReference type="Proteomes" id="UP000006924">
    <property type="component" value="Chromosome"/>
</dbReference>
<dbReference type="GO" id="GO:0005737">
    <property type="term" value="C:cytoplasm"/>
    <property type="evidence" value="ECO:0007669"/>
    <property type="project" value="UniProtKB-SubCell"/>
</dbReference>
<dbReference type="GO" id="GO:0003746">
    <property type="term" value="F:translation elongation factor activity"/>
    <property type="evidence" value="ECO:0007669"/>
    <property type="project" value="UniProtKB-UniRule"/>
</dbReference>
<dbReference type="CDD" id="cd14275">
    <property type="entry name" value="UBA_EF-Ts"/>
    <property type="match status" value="1"/>
</dbReference>
<dbReference type="FunFam" id="1.10.286.20:FF:000001">
    <property type="entry name" value="Elongation factor Ts"/>
    <property type="match status" value="1"/>
</dbReference>
<dbReference type="FunFam" id="1.10.8.10:FF:000001">
    <property type="entry name" value="Elongation factor Ts"/>
    <property type="match status" value="1"/>
</dbReference>
<dbReference type="FunFam" id="3.30.479.20:FF:000001">
    <property type="entry name" value="Elongation factor Ts"/>
    <property type="match status" value="1"/>
</dbReference>
<dbReference type="Gene3D" id="1.10.286.20">
    <property type="match status" value="1"/>
</dbReference>
<dbReference type="Gene3D" id="1.10.8.10">
    <property type="entry name" value="DNA helicase RuvA subunit, C-terminal domain"/>
    <property type="match status" value="1"/>
</dbReference>
<dbReference type="Gene3D" id="3.30.479.20">
    <property type="entry name" value="Elongation factor Ts, dimerisation domain"/>
    <property type="match status" value="2"/>
</dbReference>
<dbReference type="HAMAP" id="MF_00050">
    <property type="entry name" value="EF_Ts"/>
    <property type="match status" value="1"/>
</dbReference>
<dbReference type="InterPro" id="IPR036402">
    <property type="entry name" value="EF-Ts_dimer_sf"/>
</dbReference>
<dbReference type="InterPro" id="IPR001816">
    <property type="entry name" value="Transl_elong_EFTs/EF1B"/>
</dbReference>
<dbReference type="InterPro" id="IPR014039">
    <property type="entry name" value="Transl_elong_EFTs/EF1B_dimer"/>
</dbReference>
<dbReference type="InterPro" id="IPR018101">
    <property type="entry name" value="Transl_elong_Ts_CS"/>
</dbReference>
<dbReference type="InterPro" id="IPR009060">
    <property type="entry name" value="UBA-like_sf"/>
</dbReference>
<dbReference type="NCBIfam" id="TIGR00116">
    <property type="entry name" value="tsf"/>
    <property type="match status" value="1"/>
</dbReference>
<dbReference type="PANTHER" id="PTHR11741">
    <property type="entry name" value="ELONGATION FACTOR TS"/>
    <property type="match status" value="1"/>
</dbReference>
<dbReference type="PANTHER" id="PTHR11741:SF0">
    <property type="entry name" value="ELONGATION FACTOR TS, MITOCHONDRIAL"/>
    <property type="match status" value="1"/>
</dbReference>
<dbReference type="Pfam" id="PF00889">
    <property type="entry name" value="EF_TS"/>
    <property type="match status" value="1"/>
</dbReference>
<dbReference type="SUPFAM" id="SSF54713">
    <property type="entry name" value="Elongation factor Ts (EF-Ts), dimerisation domain"/>
    <property type="match status" value="1"/>
</dbReference>
<dbReference type="SUPFAM" id="SSF46934">
    <property type="entry name" value="UBA-like"/>
    <property type="match status" value="1"/>
</dbReference>
<dbReference type="PROSITE" id="PS01126">
    <property type="entry name" value="EF_TS_1"/>
    <property type="match status" value="1"/>
</dbReference>
<dbReference type="PROSITE" id="PS01127">
    <property type="entry name" value="EF_TS_2"/>
    <property type="match status" value="1"/>
</dbReference>
<feature type="chain" id="PRO_1000116675" description="Elongation factor Ts">
    <location>
        <begin position="1"/>
        <end position="291"/>
    </location>
</feature>
<feature type="region of interest" description="Involved in Mg(2+) ion dislocation from EF-Tu" evidence="1">
    <location>
        <begin position="80"/>
        <end position="83"/>
    </location>
</feature>
<sequence length="291" mass="30710">MTAITASMVKELRDRTGLAMMECKKALTEANGDIELAIDNLRKSGQAKAAKKAGNIAADGAITIVQDGNKAILVEVNCQTDFVAKDENFSNFAHTVAAAALAAGETDAAKIAELKLADGQSVEEARIALVQKIGENIQVRRAKIVEGEQLAIYKHGLKIGVVVSYTGDADTGKGIAMHVAAFNPVAVNAEAVPADLIAKEKEIAEAKALESGKPANIVEKMVTGSVEKYLNEVALDRQMYVIDNEKKVADVLKATGTNVANFVRFEVGEGIEKKAELSFAEEVAAAQAAAK</sequence>
<keyword id="KW-0963">Cytoplasm</keyword>
<keyword id="KW-0251">Elongation factor</keyword>
<keyword id="KW-0648">Protein biosynthesis</keyword>
<gene>
    <name evidence="1" type="primary">tsf</name>
    <name type="ordered locus">ABBFA_001119</name>
</gene>
<proteinExistence type="inferred from homology"/>
<name>EFTS_ACIB3</name>
<evidence type="ECO:0000255" key="1">
    <source>
        <dbReference type="HAMAP-Rule" id="MF_00050"/>
    </source>
</evidence>
<accession>B7GZQ0</accession>
<protein>
    <recommendedName>
        <fullName evidence="1">Elongation factor Ts</fullName>
        <shortName evidence="1">EF-Ts</shortName>
    </recommendedName>
</protein>
<reference key="1">
    <citation type="journal article" date="2008" name="J. Bacteriol.">
        <title>Comparative genome sequence analysis of multidrug-resistant Acinetobacter baumannii.</title>
        <authorList>
            <person name="Adams M.D."/>
            <person name="Goglin K."/>
            <person name="Molyneaux N."/>
            <person name="Hujer K.M."/>
            <person name="Lavender H."/>
            <person name="Jamison J.J."/>
            <person name="MacDonald I.J."/>
            <person name="Martin K.M."/>
            <person name="Russo T."/>
            <person name="Campagnari A.A."/>
            <person name="Hujer A.M."/>
            <person name="Bonomo R.A."/>
            <person name="Gill S.R."/>
        </authorList>
    </citation>
    <scope>NUCLEOTIDE SEQUENCE [LARGE SCALE GENOMIC DNA]</scope>
    <source>
        <strain>AB307-0294</strain>
    </source>
</reference>